<name>MINC_BORBR</name>
<evidence type="ECO:0000255" key="1">
    <source>
        <dbReference type="HAMAP-Rule" id="MF_00267"/>
    </source>
</evidence>
<evidence type="ECO:0000256" key="2">
    <source>
        <dbReference type="SAM" id="MobiDB-lite"/>
    </source>
</evidence>
<keyword id="KW-0131">Cell cycle</keyword>
<keyword id="KW-0132">Cell division</keyword>
<keyword id="KW-0717">Septation</keyword>
<dbReference type="EMBL" id="BX640449">
    <property type="protein sequence ID" value="CAE34377.1"/>
    <property type="molecule type" value="Genomic_DNA"/>
</dbReference>
<dbReference type="RefSeq" id="WP_010927012.1">
    <property type="nucleotide sequence ID" value="NC_002927.3"/>
</dbReference>
<dbReference type="SMR" id="Q7WGA5"/>
<dbReference type="KEGG" id="bbr:BB4014"/>
<dbReference type="eggNOG" id="COG0850">
    <property type="taxonomic scope" value="Bacteria"/>
</dbReference>
<dbReference type="HOGENOM" id="CLU_067812_0_0_4"/>
<dbReference type="Proteomes" id="UP000001027">
    <property type="component" value="Chromosome"/>
</dbReference>
<dbReference type="GO" id="GO:0000902">
    <property type="term" value="P:cell morphogenesis"/>
    <property type="evidence" value="ECO:0007669"/>
    <property type="project" value="InterPro"/>
</dbReference>
<dbReference type="GO" id="GO:0000917">
    <property type="term" value="P:division septum assembly"/>
    <property type="evidence" value="ECO:0007669"/>
    <property type="project" value="UniProtKB-KW"/>
</dbReference>
<dbReference type="GO" id="GO:0051302">
    <property type="term" value="P:regulation of cell division"/>
    <property type="evidence" value="ECO:0007669"/>
    <property type="project" value="InterPro"/>
</dbReference>
<dbReference type="GO" id="GO:1901891">
    <property type="term" value="P:regulation of cell septum assembly"/>
    <property type="evidence" value="ECO:0007669"/>
    <property type="project" value="InterPro"/>
</dbReference>
<dbReference type="Gene3D" id="2.160.20.70">
    <property type="match status" value="1"/>
</dbReference>
<dbReference type="Gene3D" id="3.30.70.260">
    <property type="match status" value="1"/>
</dbReference>
<dbReference type="HAMAP" id="MF_00267">
    <property type="entry name" value="MinC"/>
    <property type="match status" value="1"/>
</dbReference>
<dbReference type="InterPro" id="IPR016098">
    <property type="entry name" value="CAP/MinC_C"/>
</dbReference>
<dbReference type="InterPro" id="IPR013033">
    <property type="entry name" value="MinC"/>
</dbReference>
<dbReference type="InterPro" id="IPR036145">
    <property type="entry name" value="MinC_C_sf"/>
</dbReference>
<dbReference type="InterPro" id="IPR007874">
    <property type="entry name" value="MinC_N"/>
</dbReference>
<dbReference type="InterPro" id="IPR005526">
    <property type="entry name" value="Septum_form_inhib_MinC_C"/>
</dbReference>
<dbReference type="NCBIfam" id="TIGR01222">
    <property type="entry name" value="minC"/>
    <property type="match status" value="1"/>
</dbReference>
<dbReference type="PANTHER" id="PTHR34108">
    <property type="entry name" value="SEPTUM SITE-DETERMINING PROTEIN MINC"/>
    <property type="match status" value="1"/>
</dbReference>
<dbReference type="PANTHER" id="PTHR34108:SF1">
    <property type="entry name" value="SEPTUM SITE-DETERMINING PROTEIN MINC"/>
    <property type="match status" value="1"/>
</dbReference>
<dbReference type="Pfam" id="PF03775">
    <property type="entry name" value="MinC_C"/>
    <property type="match status" value="1"/>
</dbReference>
<dbReference type="Pfam" id="PF05209">
    <property type="entry name" value="MinC_N"/>
    <property type="match status" value="1"/>
</dbReference>
<dbReference type="SUPFAM" id="SSF63848">
    <property type="entry name" value="Cell-division inhibitor MinC, C-terminal domain"/>
    <property type="match status" value="1"/>
</dbReference>
<gene>
    <name evidence="1" type="primary">minC</name>
    <name type="ordered locus">BB4014</name>
</gene>
<proteinExistence type="inferred from homology"/>
<accession>Q7WGA5</accession>
<sequence>MNTESLALDFKSATLYAIRVVLHDADTTRLRAALDKRMADAGSFFENEPVVIDATRVDAPVDWPALLQALADHNLPPIGVVAEGANLQGARDAGLVPVELSTPVARAPQVIDTAPPNDVATPVPSVPEATAEAAAKAGPQDDEAYGEQADEAPAHNPESVPTRAARETTEANRPTATPPQSSSALVITKPLRSGQRVYARHTDLIVIGMVSQGAEVIADGNVHVYGPLRGKAMAGARGDTSARIFTTQLDAELLAVAGVYRVVEDKLDRALHNQPALVRLDGDTLRIEALKG</sequence>
<organism>
    <name type="scientific">Bordetella bronchiseptica (strain ATCC BAA-588 / NCTC 13252 / RB50)</name>
    <name type="common">Alcaligenes bronchisepticus</name>
    <dbReference type="NCBI Taxonomy" id="257310"/>
    <lineage>
        <taxon>Bacteria</taxon>
        <taxon>Pseudomonadati</taxon>
        <taxon>Pseudomonadota</taxon>
        <taxon>Betaproteobacteria</taxon>
        <taxon>Burkholderiales</taxon>
        <taxon>Alcaligenaceae</taxon>
        <taxon>Bordetella</taxon>
    </lineage>
</organism>
<comment type="function">
    <text evidence="1">Cell division inhibitor that blocks the formation of polar Z ring septums. Rapidly oscillates between the poles of the cell to destabilize FtsZ filaments that have formed before they mature into polar Z rings. Prevents FtsZ polymerization.</text>
</comment>
<comment type="subunit">
    <text evidence="1">Interacts with MinD and FtsZ.</text>
</comment>
<comment type="similarity">
    <text evidence="1">Belongs to the MinC family.</text>
</comment>
<protein>
    <recommendedName>
        <fullName evidence="1">Probable septum site-determining protein MinC</fullName>
    </recommendedName>
</protein>
<reference key="1">
    <citation type="journal article" date="2003" name="Nat. Genet.">
        <title>Comparative analysis of the genome sequences of Bordetella pertussis, Bordetella parapertussis and Bordetella bronchiseptica.</title>
        <authorList>
            <person name="Parkhill J."/>
            <person name="Sebaihia M."/>
            <person name="Preston A."/>
            <person name="Murphy L.D."/>
            <person name="Thomson N.R."/>
            <person name="Harris D.E."/>
            <person name="Holden M.T.G."/>
            <person name="Churcher C.M."/>
            <person name="Bentley S.D."/>
            <person name="Mungall K.L."/>
            <person name="Cerdeno-Tarraga A.-M."/>
            <person name="Temple L."/>
            <person name="James K.D."/>
            <person name="Harris B."/>
            <person name="Quail M.A."/>
            <person name="Achtman M."/>
            <person name="Atkin R."/>
            <person name="Baker S."/>
            <person name="Basham D."/>
            <person name="Bason N."/>
            <person name="Cherevach I."/>
            <person name="Chillingworth T."/>
            <person name="Collins M."/>
            <person name="Cronin A."/>
            <person name="Davis P."/>
            <person name="Doggett J."/>
            <person name="Feltwell T."/>
            <person name="Goble A."/>
            <person name="Hamlin N."/>
            <person name="Hauser H."/>
            <person name="Holroyd S."/>
            <person name="Jagels K."/>
            <person name="Leather S."/>
            <person name="Moule S."/>
            <person name="Norberczak H."/>
            <person name="O'Neil S."/>
            <person name="Ormond D."/>
            <person name="Price C."/>
            <person name="Rabbinowitsch E."/>
            <person name="Rutter S."/>
            <person name="Sanders M."/>
            <person name="Saunders D."/>
            <person name="Seeger K."/>
            <person name="Sharp S."/>
            <person name="Simmonds M."/>
            <person name="Skelton J."/>
            <person name="Squares R."/>
            <person name="Squares S."/>
            <person name="Stevens K."/>
            <person name="Unwin L."/>
            <person name="Whitehead S."/>
            <person name="Barrell B.G."/>
            <person name="Maskell D.J."/>
        </authorList>
    </citation>
    <scope>NUCLEOTIDE SEQUENCE [LARGE SCALE GENOMIC DNA]</scope>
    <source>
        <strain>ATCC BAA-588 / NCTC 13252 / RB50</strain>
    </source>
</reference>
<feature type="chain" id="PRO_0000189018" description="Probable septum site-determining protein MinC">
    <location>
        <begin position="1"/>
        <end position="292"/>
    </location>
</feature>
<feature type="region of interest" description="Disordered" evidence="2">
    <location>
        <begin position="112"/>
        <end position="188"/>
    </location>
</feature>
<feature type="compositionally biased region" description="Low complexity" evidence="2">
    <location>
        <begin position="128"/>
        <end position="137"/>
    </location>
</feature>
<feature type="compositionally biased region" description="Acidic residues" evidence="2">
    <location>
        <begin position="140"/>
        <end position="150"/>
    </location>
</feature>
<feature type="compositionally biased region" description="Polar residues" evidence="2">
    <location>
        <begin position="171"/>
        <end position="185"/>
    </location>
</feature>